<proteinExistence type="predicted"/>
<sequence>MSRLPSKTKYHSSHRSLNRKTPLLQRSSETNSLRESGIETASSQLSLAASSYTPIDEEMTELELKIYLFLFTRALNHKLGYTQENNPDDKAQKAGIDINLDCLNYLLEILYQNLEPQLEKGANLSYHKSSTARKALEYHETLNSRLKKKIAKDAEHKNPLTLLRILNTKTTSISTLIGTGGGIGITGAGAIAGSAAAGIGTAVTVGVLLFYLCWRTTSEYWKKKNAEKLFEHTDQIDNENIIELVSALSAFYIVKEFEHKNMQKASLKLSLNPESLFEIFQNIYHNKSFRLPSQLPIQKELKAIAKQAKIDADKIHTHLIEYVNTNKAQSISINLYALIIPSFAYNSEESPTVVKTVAALHAWLWALDKTLDMKDFLFRNSFEKRLEKVRAGVVKTMKTFKEEVNNVLLETDDSSSGVSLLADEDKTDRVKEWVNKQKLPSPGALSPIKSASHLALFSSLREQKDKAVNSSGSRLSLRLGN</sequence>
<gene>
    <name type="ordered locus">CBU_1818</name>
</gene>
<protein>
    <recommendedName>
        <fullName>Uncharacterized protein CBU_1818</fullName>
    </recommendedName>
</protein>
<reference key="1">
    <citation type="journal article" date="2003" name="Proc. Natl. Acad. Sci. U.S.A.">
        <title>Complete genome sequence of the Q-fever pathogen, Coxiella burnetii.</title>
        <authorList>
            <person name="Seshadri R."/>
            <person name="Paulsen I.T."/>
            <person name="Eisen J.A."/>
            <person name="Read T.D."/>
            <person name="Nelson K.E."/>
            <person name="Nelson W.C."/>
            <person name="Ward N.L."/>
            <person name="Tettelin H."/>
            <person name="Davidsen T.M."/>
            <person name="Beanan M.J."/>
            <person name="DeBoy R.T."/>
            <person name="Daugherty S.C."/>
            <person name="Brinkac L.M."/>
            <person name="Madupu R."/>
            <person name="Dodson R.J."/>
            <person name="Khouri H.M."/>
            <person name="Lee K.H."/>
            <person name="Carty H.A."/>
            <person name="Scanlan D."/>
            <person name="Heinzen R.A."/>
            <person name="Thompson H.A."/>
            <person name="Samuel J.E."/>
            <person name="Fraser C.M."/>
            <person name="Heidelberg J.F."/>
        </authorList>
    </citation>
    <scope>NUCLEOTIDE SEQUENCE [LARGE SCALE GENOMIC DNA]</scope>
    <source>
        <strain>RSA 493 / Nine Mile phase I</strain>
    </source>
</reference>
<evidence type="ECO:0000255" key="1"/>
<evidence type="ECO:0000256" key="2">
    <source>
        <dbReference type="SAM" id="MobiDB-lite"/>
    </source>
</evidence>
<evidence type="ECO:0000305" key="3"/>
<feature type="chain" id="PRO_0000309268" description="Uncharacterized protein CBU_1818">
    <location>
        <begin position="1"/>
        <end position="481"/>
    </location>
</feature>
<feature type="transmembrane region" description="Helical" evidence="1">
    <location>
        <begin position="172"/>
        <end position="191"/>
    </location>
</feature>
<feature type="transmembrane region" description="Helical" evidence="1">
    <location>
        <begin position="195"/>
        <end position="214"/>
    </location>
</feature>
<feature type="region of interest" description="Disordered" evidence="2">
    <location>
        <begin position="1"/>
        <end position="37"/>
    </location>
</feature>
<feature type="compositionally biased region" description="Basic residues" evidence="2">
    <location>
        <begin position="1"/>
        <end position="18"/>
    </location>
</feature>
<feature type="compositionally biased region" description="Polar residues" evidence="2">
    <location>
        <begin position="24"/>
        <end position="34"/>
    </location>
</feature>
<organism>
    <name type="scientific">Coxiella burnetii (strain RSA 493 / Nine Mile phase I)</name>
    <dbReference type="NCBI Taxonomy" id="227377"/>
    <lineage>
        <taxon>Bacteria</taxon>
        <taxon>Pseudomonadati</taxon>
        <taxon>Pseudomonadota</taxon>
        <taxon>Gammaproteobacteria</taxon>
        <taxon>Legionellales</taxon>
        <taxon>Coxiellaceae</taxon>
        <taxon>Coxiella</taxon>
    </lineage>
</organism>
<name>Y1818_COXBU</name>
<comment type="subcellular location">
    <subcellularLocation>
        <location evidence="3">Membrane</location>
        <topology evidence="3">Multi-pass membrane protein</topology>
    </subcellularLocation>
</comment>
<dbReference type="EMBL" id="AE016828">
    <property type="protein sequence ID" value="AAO91311.1"/>
    <property type="molecule type" value="Genomic_DNA"/>
</dbReference>
<dbReference type="RefSeq" id="NP_820797.1">
    <property type="nucleotide sequence ID" value="NC_002971.4"/>
</dbReference>
<dbReference type="RefSeq" id="WP_010958462.1">
    <property type="nucleotide sequence ID" value="NC_002971.4"/>
</dbReference>
<dbReference type="STRING" id="227377.CBU_1818"/>
<dbReference type="EnsemblBacteria" id="AAO91311">
    <property type="protein sequence ID" value="AAO91311"/>
    <property type="gene ID" value="CBU_1818"/>
</dbReference>
<dbReference type="GeneID" id="1209729"/>
<dbReference type="KEGG" id="cbu:CBU_1818"/>
<dbReference type="PATRIC" id="fig|227377.7.peg.1804"/>
<dbReference type="HOGENOM" id="CLU_044182_0_0_6"/>
<dbReference type="Proteomes" id="UP000002671">
    <property type="component" value="Chromosome"/>
</dbReference>
<dbReference type="GO" id="GO:0016020">
    <property type="term" value="C:membrane"/>
    <property type="evidence" value="ECO:0007669"/>
    <property type="project" value="UniProtKB-SubCell"/>
</dbReference>
<keyword id="KW-0472">Membrane</keyword>
<keyword id="KW-1185">Reference proteome</keyword>
<keyword id="KW-0812">Transmembrane</keyword>
<keyword id="KW-1133">Transmembrane helix</keyword>
<accession>Q83AR2</accession>